<sequence length="130" mass="14536">MAATQYYGTGRRKTSTARVFAKAGSGNIVVNQRPLDQYFGRETARMVVRQPLELVEMTDKLDIYVTVKGGGITGQAGAIRHGITRALMQLDEALRPSLRSAGFVTRDARKVERKKVGLRKARRKPQFSKR</sequence>
<comment type="similarity">
    <text evidence="1">Belongs to the universal ribosomal protein uS9 family.</text>
</comment>
<accession>Q8EAG3</accession>
<dbReference type="EMBL" id="AE014299">
    <property type="protein sequence ID" value="AAN56914.1"/>
    <property type="molecule type" value="Genomic_DNA"/>
</dbReference>
<dbReference type="RefSeq" id="NP_719470.1">
    <property type="nucleotide sequence ID" value="NC_004347.2"/>
</dbReference>
<dbReference type="RefSeq" id="WP_006083052.1">
    <property type="nucleotide sequence ID" value="NZ_CP053946.1"/>
</dbReference>
<dbReference type="SMR" id="Q8EAG3"/>
<dbReference type="STRING" id="211586.SO_3939"/>
<dbReference type="PaxDb" id="211586-SO_3939"/>
<dbReference type="GeneID" id="94726683"/>
<dbReference type="KEGG" id="son:SO_3939"/>
<dbReference type="PATRIC" id="fig|211586.12.peg.3822"/>
<dbReference type="eggNOG" id="COG0103">
    <property type="taxonomic scope" value="Bacteria"/>
</dbReference>
<dbReference type="HOGENOM" id="CLU_046483_2_1_6"/>
<dbReference type="OrthoDB" id="9803965at2"/>
<dbReference type="PhylomeDB" id="Q8EAG3"/>
<dbReference type="BioCyc" id="SONE211586:G1GMP-3656-MONOMER"/>
<dbReference type="PRO" id="PR:Q8EAG3"/>
<dbReference type="Proteomes" id="UP000008186">
    <property type="component" value="Chromosome"/>
</dbReference>
<dbReference type="GO" id="GO:0022627">
    <property type="term" value="C:cytosolic small ribosomal subunit"/>
    <property type="evidence" value="ECO:0000318"/>
    <property type="project" value="GO_Central"/>
</dbReference>
<dbReference type="GO" id="GO:0003723">
    <property type="term" value="F:RNA binding"/>
    <property type="evidence" value="ECO:0000318"/>
    <property type="project" value="GO_Central"/>
</dbReference>
<dbReference type="GO" id="GO:0003735">
    <property type="term" value="F:structural constituent of ribosome"/>
    <property type="evidence" value="ECO:0000318"/>
    <property type="project" value="GO_Central"/>
</dbReference>
<dbReference type="GO" id="GO:0006412">
    <property type="term" value="P:translation"/>
    <property type="evidence" value="ECO:0007669"/>
    <property type="project" value="UniProtKB-UniRule"/>
</dbReference>
<dbReference type="FunFam" id="3.30.230.10:FF:000001">
    <property type="entry name" value="30S ribosomal protein S9"/>
    <property type="match status" value="1"/>
</dbReference>
<dbReference type="Gene3D" id="3.30.230.10">
    <property type="match status" value="1"/>
</dbReference>
<dbReference type="HAMAP" id="MF_00532_B">
    <property type="entry name" value="Ribosomal_uS9_B"/>
    <property type="match status" value="1"/>
</dbReference>
<dbReference type="InterPro" id="IPR020568">
    <property type="entry name" value="Ribosomal_Su5_D2-typ_SF"/>
</dbReference>
<dbReference type="InterPro" id="IPR000754">
    <property type="entry name" value="Ribosomal_uS9"/>
</dbReference>
<dbReference type="InterPro" id="IPR023035">
    <property type="entry name" value="Ribosomal_uS9_bac/plastid"/>
</dbReference>
<dbReference type="InterPro" id="IPR020574">
    <property type="entry name" value="Ribosomal_uS9_CS"/>
</dbReference>
<dbReference type="InterPro" id="IPR014721">
    <property type="entry name" value="Ribsml_uS5_D2-typ_fold_subgr"/>
</dbReference>
<dbReference type="NCBIfam" id="NF001099">
    <property type="entry name" value="PRK00132.1"/>
    <property type="match status" value="1"/>
</dbReference>
<dbReference type="PANTHER" id="PTHR21569">
    <property type="entry name" value="RIBOSOMAL PROTEIN S9"/>
    <property type="match status" value="1"/>
</dbReference>
<dbReference type="PANTHER" id="PTHR21569:SF1">
    <property type="entry name" value="SMALL RIBOSOMAL SUBUNIT PROTEIN US9M"/>
    <property type="match status" value="1"/>
</dbReference>
<dbReference type="Pfam" id="PF00380">
    <property type="entry name" value="Ribosomal_S9"/>
    <property type="match status" value="1"/>
</dbReference>
<dbReference type="SUPFAM" id="SSF54211">
    <property type="entry name" value="Ribosomal protein S5 domain 2-like"/>
    <property type="match status" value="1"/>
</dbReference>
<dbReference type="PROSITE" id="PS00360">
    <property type="entry name" value="RIBOSOMAL_S9"/>
    <property type="match status" value="1"/>
</dbReference>
<proteinExistence type="inferred from homology"/>
<feature type="chain" id="PRO_0000111402" description="Small ribosomal subunit protein uS9">
    <location>
        <begin position="1"/>
        <end position="130"/>
    </location>
</feature>
<reference key="1">
    <citation type="journal article" date="2002" name="Nat. Biotechnol.">
        <title>Genome sequence of the dissimilatory metal ion-reducing bacterium Shewanella oneidensis.</title>
        <authorList>
            <person name="Heidelberg J.F."/>
            <person name="Paulsen I.T."/>
            <person name="Nelson K.E."/>
            <person name="Gaidos E.J."/>
            <person name="Nelson W.C."/>
            <person name="Read T.D."/>
            <person name="Eisen J.A."/>
            <person name="Seshadri R."/>
            <person name="Ward N.L."/>
            <person name="Methe B.A."/>
            <person name="Clayton R.A."/>
            <person name="Meyer T."/>
            <person name="Tsapin A."/>
            <person name="Scott J."/>
            <person name="Beanan M.J."/>
            <person name="Brinkac L.M."/>
            <person name="Daugherty S.C."/>
            <person name="DeBoy R.T."/>
            <person name="Dodson R.J."/>
            <person name="Durkin A.S."/>
            <person name="Haft D.H."/>
            <person name="Kolonay J.F."/>
            <person name="Madupu R."/>
            <person name="Peterson J.D."/>
            <person name="Umayam L.A."/>
            <person name="White O."/>
            <person name="Wolf A.M."/>
            <person name="Vamathevan J.J."/>
            <person name="Weidman J.F."/>
            <person name="Impraim M."/>
            <person name="Lee K."/>
            <person name="Berry K.J."/>
            <person name="Lee C."/>
            <person name="Mueller J."/>
            <person name="Khouri H.M."/>
            <person name="Gill J."/>
            <person name="Utterback T.R."/>
            <person name="McDonald L.A."/>
            <person name="Feldblyum T.V."/>
            <person name="Smith H.O."/>
            <person name="Venter J.C."/>
            <person name="Nealson K.H."/>
            <person name="Fraser C.M."/>
        </authorList>
    </citation>
    <scope>NUCLEOTIDE SEQUENCE [LARGE SCALE GENOMIC DNA]</scope>
    <source>
        <strain>ATCC 700550 / JCM 31522 / CIP 106686 / LMG 19005 / NCIMB 14063 / MR-1</strain>
    </source>
</reference>
<keyword id="KW-1185">Reference proteome</keyword>
<keyword id="KW-0687">Ribonucleoprotein</keyword>
<keyword id="KW-0689">Ribosomal protein</keyword>
<name>RS9_SHEON</name>
<protein>
    <recommendedName>
        <fullName evidence="1">Small ribosomal subunit protein uS9</fullName>
    </recommendedName>
    <alternativeName>
        <fullName evidence="2">30S ribosomal protein S9</fullName>
    </alternativeName>
</protein>
<evidence type="ECO:0000255" key="1">
    <source>
        <dbReference type="HAMAP-Rule" id="MF_00532"/>
    </source>
</evidence>
<evidence type="ECO:0000305" key="2"/>
<organism>
    <name type="scientific">Shewanella oneidensis (strain ATCC 700550 / JCM 31522 / CIP 106686 / LMG 19005 / NCIMB 14063 / MR-1)</name>
    <dbReference type="NCBI Taxonomy" id="211586"/>
    <lineage>
        <taxon>Bacteria</taxon>
        <taxon>Pseudomonadati</taxon>
        <taxon>Pseudomonadota</taxon>
        <taxon>Gammaproteobacteria</taxon>
        <taxon>Alteromonadales</taxon>
        <taxon>Shewanellaceae</taxon>
        <taxon>Shewanella</taxon>
    </lineage>
</organism>
<gene>
    <name evidence="1" type="primary">rpsI</name>
    <name type="ordered locus">SO_3939</name>
</gene>